<gene>
    <name evidence="1" type="primary">hemL1</name>
    <name type="ordered locus">CENSYa_1357</name>
</gene>
<name>GSA1_CENSY</name>
<comment type="catalytic activity">
    <reaction evidence="1">
        <text>(S)-4-amino-5-oxopentanoate = 5-aminolevulinate</text>
        <dbReference type="Rhea" id="RHEA:14265"/>
        <dbReference type="ChEBI" id="CHEBI:57501"/>
        <dbReference type="ChEBI" id="CHEBI:356416"/>
        <dbReference type="EC" id="5.4.3.8"/>
    </reaction>
</comment>
<comment type="cofactor">
    <cofactor evidence="1">
        <name>pyridoxal 5'-phosphate</name>
        <dbReference type="ChEBI" id="CHEBI:597326"/>
    </cofactor>
</comment>
<comment type="pathway">
    <text evidence="1">Porphyrin-containing compound metabolism; protoporphyrin-IX biosynthesis; 5-aminolevulinate from L-glutamyl-tRNA(Glu): step 2/2.</text>
</comment>
<comment type="subcellular location">
    <subcellularLocation>
        <location evidence="1">Cytoplasm</location>
    </subcellularLocation>
</comment>
<comment type="similarity">
    <text evidence="1">Belongs to the class-III pyridoxal-phosphate-dependent aminotransferase family. HemL subfamily.</text>
</comment>
<comment type="sequence caution" evidence="2">
    <conflict type="erroneous initiation">
        <sequence resource="EMBL-CDS" id="ABK77980"/>
    </conflict>
</comment>
<reference key="1">
    <citation type="journal article" date="2006" name="Proc. Natl. Acad. Sci. U.S.A.">
        <title>Genomic analysis of the uncultivated marine crenarchaeote Cenarchaeum symbiosum.</title>
        <authorList>
            <person name="Hallam S.J."/>
            <person name="Konstantinidis K.T."/>
            <person name="Putnam N."/>
            <person name="Schleper C."/>
            <person name="Watanabe Y."/>
            <person name="Sugahara J."/>
            <person name="Preston C."/>
            <person name="de la Torre J."/>
            <person name="Richardson P.M."/>
            <person name="DeLong E.F."/>
        </authorList>
    </citation>
    <scope>NUCLEOTIDE SEQUENCE [LARGE SCALE GENOMIC DNA]</scope>
    <source>
        <strain>A</strain>
    </source>
</reference>
<dbReference type="EC" id="5.4.3.8" evidence="1"/>
<dbReference type="EMBL" id="DP000238">
    <property type="protein sequence ID" value="ABK77980.1"/>
    <property type="status" value="ALT_INIT"/>
    <property type="molecule type" value="Genomic_DNA"/>
</dbReference>
<dbReference type="SMR" id="A0RXB3"/>
<dbReference type="STRING" id="414004.CENSYa_1357"/>
<dbReference type="EnsemblBacteria" id="ABK77980">
    <property type="protein sequence ID" value="ABK77980"/>
    <property type="gene ID" value="CENSYa_1357"/>
</dbReference>
<dbReference type="KEGG" id="csy:CENSYa_1357"/>
<dbReference type="PATRIC" id="fig|414004.10.peg.1241"/>
<dbReference type="HOGENOM" id="CLU_016922_1_5_2"/>
<dbReference type="UniPathway" id="UPA00251">
    <property type="reaction ID" value="UER00317"/>
</dbReference>
<dbReference type="Proteomes" id="UP000000758">
    <property type="component" value="Chromosome"/>
</dbReference>
<dbReference type="GO" id="GO:0005737">
    <property type="term" value="C:cytoplasm"/>
    <property type="evidence" value="ECO:0007669"/>
    <property type="project" value="UniProtKB-SubCell"/>
</dbReference>
<dbReference type="GO" id="GO:0042286">
    <property type="term" value="F:glutamate-1-semialdehyde 2,1-aminomutase activity"/>
    <property type="evidence" value="ECO:0007669"/>
    <property type="project" value="UniProtKB-UniRule"/>
</dbReference>
<dbReference type="GO" id="GO:0030170">
    <property type="term" value="F:pyridoxal phosphate binding"/>
    <property type="evidence" value="ECO:0007669"/>
    <property type="project" value="InterPro"/>
</dbReference>
<dbReference type="GO" id="GO:0008483">
    <property type="term" value="F:transaminase activity"/>
    <property type="evidence" value="ECO:0007669"/>
    <property type="project" value="InterPro"/>
</dbReference>
<dbReference type="GO" id="GO:0006782">
    <property type="term" value="P:protoporphyrinogen IX biosynthetic process"/>
    <property type="evidence" value="ECO:0007669"/>
    <property type="project" value="UniProtKB-UniRule"/>
</dbReference>
<dbReference type="CDD" id="cd00610">
    <property type="entry name" value="OAT_like"/>
    <property type="match status" value="1"/>
</dbReference>
<dbReference type="FunFam" id="3.40.640.10:FF:000021">
    <property type="entry name" value="Glutamate-1-semialdehyde 2,1-aminomutase"/>
    <property type="match status" value="1"/>
</dbReference>
<dbReference type="Gene3D" id="3.90.1150.10">
    <property type="entry name" value="Aspartate Aminotransferase, domain 1"/>
    <property type="match status" value="1"/>
</dbReference>
<dbReference type="Gene3D" id="3.40.640.10">
    <property type="entry name" value="Type I PLP-dependent aspartate aminotransferase-like (Major domain)"/>
    <property type="match status" value="1"/>
</dbReference>
<dbReference type="HAMAP" id="MF_00375">
    <property type="entry name" value="HemL_aminotrans_3"/>
    <property type="match status" value="1"/>
</dbReference>
<dbReference type="InterPro" id="IPR004639">
    <property type="entry name" value="4pyrrol_synth_GluAld_NH2Trfase"/>
</dbReference>
<dbReference type="InterPro" id="IPR005814">
    <property type="entry name" value="Aminotrans_3"/>
</dbReference>
<dbReference type="InterPro" id="IPR015424">
    <property type="entry name" value="PyrdxlP-dep_Trfase"/>
</dbReference>
<dbReference type="InterPro" id="IPR015421">
    <property type="entry name" value="PyrdxlP-dep_Trfase_major"/>
</dbReference>
<dbReference type="InterPro" id="IPR015422">
    <property type="entry name" value="PyrdxlP-dep_Trfase_small"/>
</dbReference>
<dbReference type="NCBIfam" id="NF000818">
    <property type="entry name" value="PRK00062.1"/>
    <property type="match status" value="1"/>
</dbReference>
<dbReference type="PANTHER" id="PTHR43713">
    <property type="entry name" value="GLUTAMATE-1-SEMIALDEHYDE 2,1-AMINOMUTASE"/>
    <property type="match status" value="1"/>
</dbReference>
<dbReference type="PANTHER" id="PTHR43713:SF3">
    <property type="entry name" value="GLUTAMATE-1-SEMIALDEHYDE 2,1-AMINOMUTASE 1, CHLOROPLASTIC-RELATED"/>
    <property type="match status" value="1"/>
</dbReference>
<dbReference type="Pfam" id="PF00202">
    <property type="entry name" value="Aminotran_3"/>
    <property type="match status" value="1"/>
</dbReference>
<dbReference type="SUPFAM" id="SSF53383">
    <property type="entry name" value="PLP-dependent transferases"/>
    <property type="match status" value="1"/>
</dbReference>
<organism>
    <name type="scientific">Cenarchaeum symbiosum (strain A)</name>
    <dbReference type="NCBI Taxonomy" id="414004"/>
    <lineage>
        <taxon>Archaea</taxon>
        <taxon>Nitrososphaerota</taxon>
        <taxon>Candidatus Cenarchaeales</taxon>
        <taxon>Candidatus Cenarchaeaceae</taxon>
        <taxon>Candidatus Cenarchaeum</taxon>
    </lineage>
</organism>
<proteinExistence type="inferred from homology"/>
<keyword id="KW-0963">Cytoplasm</keyword>
<keyword id="KW-0413">Isomerase</keyword>
<keyword id="KW-0627">Porphyrin biosynthesis</keyword>
<keyword id="KW-0663">Pyridoxal phosphate</keyword>
<keyword id="KW-1185">Reference proteome</keyword>
<accession>A0RXB3</accession>
<evidence type="ECO:0000255" key="1">
    <source>
        <dbReference type="HAMAP-Rule" id="MF_00375"/>
    </source>
</evidence>
<evidence type="ECO:0000305" key="2"/>
<sequence>MGSRGLFERARKVIPSGVNSPVRYYAPYPFFAASASGGSIRDADGRKYTDLCNGYGALLLGHGRGEVVRAVSAQLRRGTLFCVPTEQEVELARLISGNYPSMESTRLVNTGGEATMTAIRLARGFTKRDRIIKFDGCYHGAHGSVLVKAGSGSAHLGISTSEGVPRGLARQTTVIPYNDEAAFEGAAADDVAAVIVEPVMGNMGVIPPKKGFLRLLRKLSSRLGMQLIFDETITGFRLSAGGAQEAFGVRPDITTLAKALGGGLPIAAVGGKKNIMERLAPGGSVYEASTFAGNPVSVSAALASIRTINRIKGRLYPRLERAAAALASSIADDAADLGLDRQINRVASIFQVFFTAEPVTDAASAKRADAARFDKMFRALLKNGVFVAPSQFEMASLSAAHTVEDLRNVSAAYRTALGAAR</sequence>
<protein>
    <recommendedName>
        <fullName evidence="1">Glutamate-1-semialdehyde 2,1-aminomutase 1</fullName>
        <shortName evidence="1">GSA 1</shortName>
        <ecNumber evidence="1">5.4.3.8</ecNumber>
    </recommendedName>
    <alternativeName>
        <fullName evidence="1">Glutamate-1-semialdehyde aminotransferase 1</fullName>
        <shortName evidence="1">GSA-AT 1</shortName>
    </alternativeName>
</protein>
<feature type="chain" id="PRO_0000382393" description="Glutamate-1-semialdehyde 2,1-aminomutase 1">
    <location>
        <begin position="1"/>
        <end position="421"/>
    </location>
</feature>
<feature type="modified residue" description="N6-(pyridoxal phosphate)lysine" evidence="1">
    <location>
        <position position="258"/>
    </location>
</feature>